<organism>
    <name type="scientific">Pseudomonas putida</name>
    <name type="common">Arthrobacter siderocapsulatus</name>
    <dbReference type="NCBI Taxonomy" id="303"/>
    <lineage>
        <taxon>Bacteria</taxon>
        <taxon>Pseudomonadati</taxon>
        <taxon>Pseudomonadota</taxon>
        <taxon>Gammaproteobacteria</taxon>
        <taxon>Pseudomonadales</taxon>
        <taxon>Pseudomonadaceae</taxon>
        <taxon>Pseudomonas</taxon>
    </lineage>
</organism>
<name>QDO_PSEPU</name>
<keyword id="KW-0002">3D-structure</keyword>
<keyword id="KW-0223">Dioxygenase</keyword>
<keyword id="KW-0903">Direct protein sequencing</keyword>
<keyword id="KW-0560">Oxidoreductase</keyword>
<evidence type="ECO:0000250" key="1"/>
<evidence type="ECO:0000250" key="2">
    <source>
        <dbReference type="UniProtKB" id="B1MFK2"/>
    </source>
</evidence>
<evidence type="ECO:0000269" key="3">
    <source>
    </source>
</evidence>
<evidence type="ECO:0000269" key="4">
    <source>
    </source>
</evidence>
<evidence type="ECO:0000269" key="5">
    <source>
    </source>
</evidence>
<evidence type="ECO:0000269" key="6">
    <source>
    </source>
</evidence>
<evidence type="ECO:0000305" key="7"/>
<evidence type="ECO:0007829" key="8">
    <source>
        <dbReference type="PDB" id="3IBT"/>
    </source>
</evidence>
<comment type="function">
    <text evidence="6">Ring-cleaving dioxygenase involved in oxoquinoline degradation and utilization.</text>
</comment>
<comment type="catalytic activity">
    <reaction evidence="3 4 5 6">
        <text>3-hydroxy-1H-quinolin-4-one + O2 = N-formylanthranilate + CO + H(+)</text>
        <dbReference type="Rhea" id="RHEA:17949"/>
        <dbReference type="ChEBI" id="CHEBI:15378"/>
        <dbReference type="ChEBI" id="CHEBI:15379"/>
        <dbReference type="ChEBI" id="CHEBI:16569"/>
        <dbReference type="ChEBI" id="CHEBI:17245"/>
        <dbReference type="ChEBI" id="CHEBI:18410"/>
        <dbReference type="EC" id="1.13.11.47"/>
    </reaction>
</comment>
<comment type="cofactor">
    <text>None. Contrary to most other dioxygenases, this enzyme does not require a cofactor for catalysis.</text>
</comment>
<comment type="biophysicochemical properties">
    <kinetics>
        <KM evidence="4 5 6">24 uM for 1H-3-hydroxy-4-oxoquinoline</KM>
    </kinetics>
    <phDependence>
        <text evidence="4 5 6">Optimum pH is 8.</text>
    </phDependence>
</comment>
<comment type="similarity">
    <text evidence="7">Belongs to the AB hydrolase superfamily.</text>
</comment>
<gene>
    <name type="primary">qdo</name>
</gene>
<reference key="1">
    <citation type="journal article" date="1999" name="Biochim. Biophys. Acta">
        <title>Cloning, sequence analysis, and expression of the Pseudomonas putida 33/1 1H-3-hydroxy-4-oxoquinoline 2,4-dioxygenase gene, encoding a carbon monoxide forming dioxygenase.</title>
        <authorList>
            <person name="Max N."/>
            <person name="Betz A."/>
            <person name="Facey S."/>
            <person name="Lingens F."/>
            <person name="Hauer B."/>
            <person name="Fetzner S."/>
        </authorList>
    </citation>
    <scope>NUCLEOTIDE SEQUENCE [GENOMIC DNA]</scope>
    <scope>CATALYTIC ACTIVITY</scope>
    <source>
        <strain>33/1</strain>
    </source>
</reference>
<reference key="2">
    <citation type="journal article" date="1992" name="Biol. Chem. Hoppe-Seyler">
        <title>Microbial metabolism of quinoline and related compounds. XIV. Purification and properties of 1H-3-hydroxy-4-oxoquinoline oxygenase, a new extradiol cleavage enzyme from Pseudomonas putida strain 33/1.</title>
        <authorList>
            <person name="Block D.W."/>
            <person name="Lingens F."/>
        </authorList>
    </citation>
    <scope>PROTEIN SEQUENCE OF 1-24</scope>
    <scope>CATALYTIC ACTIVITY</scope>
    <scope>BIOPHYSICOCHEMICAL PROPERTIES</scope>
    <source>
        <strain>33/1</strain>
    </source>
</reference>
<reference key="3">
    <citation type="journal article" date="1999" name="J. Bacteriol.">
        <title>Bacterial 2,4-dioxygenases: new members of the alpha/beta hydrolase-fold superfamily of enzymes functionally related to serine hydrolases.</title>
        <authorList>
            <person name="Fischer F."/>
            <person name="Kunne S."/>
            <person name="Fetzner S."/>
        </authorList>
    </citation>
    <scope>CATALYTIC ACTIVITY</scope>
    <scope>BIOPHYSICOCHEMICAL PROPERTIES</scope>
    <scope>MUTAGENESIS OF SER-95; ASP-120 AND HIS-244</scope>
    <source>
        <strain>33/1</strain>
    </source>
</reference>
<reference key="4">
    <citation type="journal article" date="2010" name="Proc. Natl. Acad. Sci. U.S.A.">
        <title>Structural basis for cofactor-independent dioxygenation of N-heteroaromatic compounds at the alpha/beta-hydrolase fold.</title>
        <authorList>
            <person name="Steiner R.A."/>
            <person name="Janssen H.J."/>
            <person name="Roversi P."/>
            <person name="Oakley A.J."/>
            <person name="Fetzner S."/>
        </authorList>
    </citation>
    <scope>X-RAY CRYSTALLOGRAPHY (2.60 ANGSTROMS)</scope>
    <scope>CATALYTIC ACTIVITY</scope>
    <scope>LACK OF COFACTOR</scope>
    <scope>FUNCTION</scope>
    <scope>BIOPHYSICOCHEMICAL PROPERTIES</scope>
    <scope>MUTAGENESIS OF ASP-120</scope>
    <source>
        <strain>33/1</strain>
    </source>
</reference>
<feature type="chain" id="PRO_0000418916" description="1H-3-hydroxy-4-oxoquinoline 2,4-dioxygenase">
    <location>
        <begin position="1"/>
        <end position="264"/>
    </location>
</feature>
<feature type="active site" description="Proton donor/acceptor" evidence="2">
    <location>
        <position position="244"/>
    </location>
</feature>
<feature type="binding site" evidence="1">
    <location>
        <begin position="30"/>
        <end position="32"/>
    </location>
    <ligand>
        <name>substrate</name>
    </ligand>
</feature>
<feature type="binding site" evidence="1">
    <location>
        <begin position="94"/>
        <end position="95"/>
    </location>
    <ligand>
        <name>substrate</name>
    </ligand>
</feature>
<feature type="binding site" evidence="1">
    <location>
        <position position="153"/>
    </location>
    <ligand>
        <name>substrate</name>
    </ligand>
</feature>
<feature type="site" description="Increases basicity of active site His" evidence="2">
    <location>
        <position position="120"/>
    </location>
</feature>
<feature type="mutagenesis site" description="Reduced affinity for substrate, and strongly reduced enzyme activity." evidence="4">
    <original>S</original>
    <variation>A</variation>
    <variation>C</variation>
    <location>
        <position position="95"/>
    </location>
</feature>
<feature type="mutagenesis site" description="Strongly reduced affinity for substrate. Strongly reduced enzyme activity." evidence="4 6">
    <original>D</original>
    <variation>A</variation>
    <location>
        <position position="120"/>
    </location>
</feature>
<feature type="mutagenesis site" description="Abolishes enzyme activity." evidence="4">
    <original>H</original>
    <variation>A</variation>
    <location>
        <position position="244"/>
    </location>
</feature>
<feature type="strand" evidence="8">
    <location>
        <begin position="13"/>
        <end position="17"/>
    </location>
</feature>
<feature type="strand" evidence="8">
    <location>
        <begin position="19"/>
        <end position="21"/>
    </location>
</feature>
<feature type="strand" evidence="8">
    <location>
        <begin position="23"/>
        <end position="27"/>
    </location>
</feature>
<feature type="helix" evidence="8">
    <location>
        <begin position="34"/>
        <end position="37"/>
    </location>
</feature>
<feature type="helix" evidence="8">
    <location>
        <begin position="40"/>
        <end position="44"/>
    </location>
</feature>
<feature type="turn" evidence="8">
    <location>
        <begin position="45"/>
        <end position="47"/>
    </location>
</feature>
<feature type="strand" evidence="8">
    <location>
        <begin position="48"/>
        <end position="53"/>
    </location>
</feature>
<feature type="helix" evidence="8">
    <location>
        <begin position="70"/>
        <end position="83"/>
    </location>
</feature>
<feature type="strand" evidence="8">
    <location>
        <begin position="88"/>
        <end position="94"/>
    </location>
</feature>
<feature type="helix" evidence="8">
    <location>
        <begin position="97"/>
        <end position="107"/>
    </location>
</feature>
<feature type="turn" evidence="8">
    <location>
        <begin position="110"/>
        <end position="112"/>
    </location>
</feature>
<feature type="strand" evidence="8">
    <location>
        <begin position="115"/>
        <end position="120"/>
    </location>
</feature>
<feature type="helix" evidence="8">
    <location>
        <begin position="127"/>
        <end position="135"/>
    </location>
</feature>
<feature type="turn" evidence="8">
    <location>
        <begin position="139"/>
        <end position="141"/>
    </location>
</feature>
<feature type="helix" evidence="8">
    <location>
        <begin position="142"/>
        <end position="154"/>
    </location>
</feature>
<feature type="helix" evidence="8">
    <location>
        <begin position="160"/>
        <end position="168"/>
    </location>
</feature>
<feature type="helix" evidence="8">
    <location>
        <begin position="170"/>
        <end position="172"/>
    </location>
</feature>
<feature type="helix" evidence="8">
    <location>
        <begin position="175"/>
        <end position="192"/>
    </location>
</feature>
<feature type="helix" evidence="8">
    <location>
        <begin position="195"/>
        <end position="200"/>
    </location>
</feature>
<feature type="strand" evidence="8">
    <location>
        <begin position="207"/>
        <end position="212"/>
    </location>
</feature>
<feature type="helix" evidence="8">
    <location>
        <begin position="218"/>
        <end position="230"/>
    </location>
</feature>
<feature type="strand" evidence="8">
    <location>
        <begin position="234"/>
        <end position="238"/>
    </location>
</feature>
<feature type="strand" evidence="8">
    <location>
        <begin position="242"/>
        <end position="244"/>
    </location>
</feature>
<feature type="helix" evidence="8">
    <location>
        <begin position="246"/>
        <end position="249"/>
    </location>
</feature>
<feature type="helix" evidence="8">
    <location>
        <begin position="251"/>
        <end position="261"/>
    </location>
</feature>
<protein>
    <recommendedName>
        <fullName>1H-3-hydroxy-4-oxoquinoline 2,4-dioxygenase</fullName>
        <ecNumber>1.13.11.47</ecNumber>
    </recommendedName>
</protein>
<sequence>MQSLNVNGTLMTYSESGDPHAPTLFLLSGWCQDHRLFKNLAPLLARDFHVICPDWRGHDAKQTDSGDFDSQTLAQDLLAFIDAKGIRDFQMVSTSHGCWVNIDVCEQLGAARLPKTIVIDWLLQPHPGFWQQLAEGQHPTEYVAGRQSFFDEWAETTDNADVLNHLRNEMPWFHGEMWQRACREIEANYRTWGSPLDRMESLPQKPEICHIYSQPLSQDYRQLQLDFAAGHSWFHPRHIPGRTHFPSLENPVAVAQAIREFLQA</sequence>
<accession>O33472</accession>
<accession>Q9R5I6</accession>
<dbReference type="EC" id="1.13.11.47"/>
<dbReference type="EMBL" id="Y14779">
    <property type="protein sequence ID" value="CAA75082.2"/>
    <property type="molecule type" value="Genomic_DNA"/>
</dbReference>
<dbReference type="PIR" id="S23121">
    <property type="entry name" value="S23121"/>
</dbReference>
<dbReference type="PDB" id="3IBT">
    <property type="method" value="X-ray"/>
    <property type="resolution" value="2.60 A"/>
    <property type="chains" value="A=1-264"/>
</dbReference>
<dbReference type="PDBsum" id="3IBT"/>
<dbReference type="SMR" id="O33472"/>
<dbReference type="ESTHER" id="psepu-QDO">
    <property type="family name" value="HOD-cofactorfree-dioxygenase"/>
</dbReference>
<dbReference type="KEGG" id="ag:CAA75082"/>
<dbReference type="BRENDA" id="1.13.11.47">
    <property type="organism ID" value="5092"/>
</dbReference>
<dbReference type="SABIO-RK" id="O33472"/>
<dbReference type="EvolutionaryTrace" id="O33472"/>
<dbReference type="GO" id="GO:0016020">
    <property type="term" value="C:membrane"/>
    <property type="evidence" value="ECO:0007669"/>
    <property type="project" value="TreeGrafter"/>
</dbReference>
<dbReference type="GO" id="GO:0047078">
    <property type="term" value="F:3-hydroxy-4-oxoquinoline 2,4-dioxygenase activity"/>
    <property type="evidence" value="ECO:0000314"/>
    <property type="project" value="UniProtKB"/>
</dbReference>
<dbReference type="Gene3D" id="1.10.210.20">
    <property type="match status" value="1"/>
</dbReference>
<dbReference type="Gene3D" id="3.40.50.1820">
    <property type="entry name" value="alpha/beta hydrolase"/>
    <property type="match status" value="1"/>
</dbReference>
<dbReference type="InterPro" id="IPR000073">
    <property type="entry name" value="AB_hydrolase_1"/>
</dbReference>
<dbReference type="InterPro" id="IPR029058">
    <property type="entry name" value="AB_hydrolase_fold"/>
</dbReference>
<dbReference type="InterPro" id="IPR050266">
    <property type="entry name" value="AB_hydrolase_sf"/>
</dbReference>
<dbReference type="PANTHER" id="PTHR43798:SF33">
    <property type="entry name" value="HYDROLASE, PUTATIVE (AFU_ORTHOLOGUE AFUA_2G14860)-RELATED"/>
    <property type="match status" value="1"/>
</dbReference>
<dbReference type="PANTHER" id="PTHR43798">
    <property type="entry name" value="MONOACYLGLYCEROL LIPASE"/>
    <property type="match status" value="1"/>
</dbReference>
<dbReference type="Pfam" id="PF12697">
    <property type="entry name" value="Abhydrolase_6"/>
    <property type="match status" value="1"/>
</dbReference>
<dbReference type="SUPFAM" id="SSF53474">
    <property type="entry name" value="alpha/beta-Hydrolases"/>
    <property type="match status" value="1"/>
</dbReference>
<proteinExistence type="evidence at protein level"/>